<keyword id="KW-0903">Direct protein sequencing</keyword>
<reference key="1">
    <citation type="journal article" date="2009" name="ChemBioChem">
        <title>Evolution of nacre: biochemistry and 'shellomics' of the shell organic matrix of the cephalopod Nautilus macromphalus.</title>
        <authorList>
            <person name="Marie B."/>
            <person name="Marin F."/>
            <person name="Marie A."/>
            <person name="Bedouet L."/>
            <person name="Dubost L."/>
            <person name="Alcaraz G."/>
            <person name="Milet C."/>
            <person name="Luquet G."/>
        </authorList>
    </citation>
    <scope>PROTEIN SEQUENCE</scope>
    <scope>TISSUE SPECIFICITY</scope>
    <source>
        <tissue>Shell</tissue>
    </source>
</reference>
<name>SMP02_NAUMA</name>
<organism>
    <name type="scientific">Nautilus macromphalus</name>
    <name type="common">Bellybutton nautilus</name>
    <dbReference type="NCBI Taxonomy" id="34576"/>
    <lineage>
        <taxon>Eukaryota</taxon>
        <taxon>Metazoa</taxon>
        <taxon>Spiralia</taxon>
        <taxon>Lophotrochozoa</taxon>
        <taxon>Mollusca</taxon>
        <taxon>Cephalopoda</taxon>
        <taxon>Nautiloidea</taxon>
        <taxon>Nautilida</taxon>
        <taxon>Nautilidae</taxon>
        <taxon>Nautilus</taxon>
    </lineage>
</organism>
<proteinExistence type="evidence at protein level"/>
<accession>P85398</accession>
<protein>
    <recommendedName>
        <fullName evidence="2">Uncharacterized protein SMPP2</fullName>
    </recommendedName>
</protein>
<evidence type="ECO:0000269" key="1">
    <source>
    </source>
</evidence>
<evidence type="ECO:0000303" key="2">
    <source>
    </source>
</evidence>
<sequence>DGDDGDGD</sequence>
<feature type="chain" id="PRO_0000371483" description="Uncharacterized protein SMPP2">
    <location>
        <begin position="1" status="less than"/>
        <end position="8" status="greater than"/>
    </location>
</feature>
<feature type="non-terminal residue" evidence="2">
    <location>
        <position position="1"/>
    </location>
</feature>
<feature type="non-terminal residue" evidence="2">
    <location>
        <position position="8"/>
    </location>
</feature>
<comment type="tissue specificity">
    <text evidence="1">Nacreous layer of shell.</text>
</comment>